<sequence>MLQEFVIAAAAGGSNPSAALSQMGFEHLITEMTSSPGDFAVSWVVLITLIAMSAASWYWTVINIFRATRLKSAADRVTTAFWDAPNAQDAIRAMEEQPASEPFSKIALDAAQAAAHHQRAEGSTGGMGESLSRSEFVDRALRQAVTRESTKLQSGMTLLATVGATAPFVGLLGTVWGIYGALIKIGATGSASIDAVAGPVGEALIMTAIGLFVAIPAVFAFNFFSKVNSSVIAKFDTFAHDLHDFFATGSRVR</sequence>
<evidence type="ECO:0000250" key="1"/>
<evidence type="ECO:0000255" key="2"/>
<evidence type="ECO:0000305" key="3"/>
<name>EXBB_XANCB</name>
<proteinExistence type="inferred from homology"/>
<comment type="function">
    <text evidence="1">Involved in the TonB-dependent energy-dependent transport of various receptor-bound substrates. Protects ExbD from proteolytic degradation and functionally stabilizes TonB (By similarity).</text>
</comment>
<comment type="subunit">
    <text evidence="1">The accessory proteins ExbB and ExbD seem to form a complex with TonB.</text>
</comment>
<comment type="subcellular location">
    <subcellularLocation>
        <location>Cell inner membrane</location>
        <topology>Multi-pass membrane protein</topology>
    </subcellularLocation>
</comment>
<comment type="similarity">
    <text evidence="3">Belongs to the ExbB/TolQ family.</text>
</comment>
<feature type="chain" id="PRO_0000339183" description="Biopolymer transport protein ExbB">
    <location>
        <begin position="1"/>
        <end position="253"/>
    </location>
</feature>
<feature type="transmembrane region" description="Helical" evidence="2">
    <location>
        <begin position="39"/>
        <end position="59"/>
    </location>
</feature>
<feature type="transmembrane region" description="Helical" evidence="2">
    <location>
        <begin position="163"/>
        <end position="183"/>
    </location>
</feature>
<feature type="transmembrane region" description="Helical" evidence="2">
    <location>
        <begin position="204"/>
        <end position="224"/>
    </location>
</feature>
<feature type="sequence conflict" description="In Ref. 1; CAB08609." evidence="3" ref="1">
    <original>A</original>
    <variation>R</variation>
    <location>
        <position position="114"/>
    </location>
</feature>
<gene>
    <name type="primary">exbB</name>
    <name type="ordered locus">xcc-b100_0009</name>
</gene>
<reference key="1">
    <citation type="journal article" date="1997" name="J. Bacteriol.">
        <title>Unusual structure of the tonB-exb DNA region of Xanthomonas campestris pv. campestris: tonB, exbB, and exbD1 are essential for ferric iron uptake, but exbD2 is not.</title>
        <authorList>
            <person name="Wiggerich H.G."/>
            <person name="Klauke B."/>
            <person name="Koeplin R."/>
            <person name="Priefer U.B."/>
            <person name="Puehler A."/>
        </authorList>
    </citation>
    <scope>NUCLEOTIDE SEQUENCE [GENOMIC DNA]</scope>
</reference>
<reference key="2">
    <citation type="journal article" date="2008" name="J. Biotechnol.">
        <title>The genome of Xanthomonas campestris pv. campestris B100 and its use for the reconstruction of metabolic pathways involved in xanthan biosynthesis.</title>
        <authorList>
            <person name="Vorhoelter F.-J."/>
            <person name="Schneiker S."/>
            <person name="Goesmann A."/>
            <person name="Krause L."/>
            <person name="Bekel T."/>
            <person name="Kaiser O."/>
            <person name="Linke B."/>
            <person name="Patschkowski T."/>
            <person name="Rueckert C."/>
            <person name="Schmid J."/>
            <person name="Sidhu V.K."/>
            <person name="Sieber V."/>
            <person name="Tauch A."/>
            <person name="Watt S.A."/>
            <person name="Weisshaar B."/>
            <person name="Becker A."/>
            <person name="Niehaus K."/>
            <person name="Puehler A."/>
        </authorList>
    </citation>
    <scope>NUCLEOTIDE SEQUENCE [LARGE SCALE GENOMIC DNA]</scope>
    <source>
        <strain>B100</strain>
    </source>
</reference>
<accession>B0RLE6</accession>
<accession>O34260</accession>
<protein>
    <recommendedName>
        <fullName>Biopolymer transport protein ExbB</fullName>
    </recommendedName>
</protein>
<keyword id="KW-0997">Cell inner membrane</keyword>
<keyword id="KW-1003">Cell membrane</keyword>
<keyword id="KW-0472">Membrane</keyword>
<keyword id="KW-0653">Protein transport</keyword>
<keyword id="KW-0812">Transmembrane</keyword>
<keyword id="KW-1133">Transmembrane helix</keyword>
<keyword id="KW-0813">Transport</keyword>
<dbReference type="EMBL" id="Z95386">
    <property type="protein sequence ID" value="CAB08609.1"/>
    <property type="molecule type" value="Genomic_DNA"/>
</dbReference>
<dbReference type="EMBL" id="AM920689">
    <property type="protein sequence ID" value="CAP49337.1"/>
    <property type="molecule type" value="Genomic_DNA"/>
</dbReference>
<dbReference type="SMR" id="B0RLE6"/>
<dbReference type="KEGG" id="xca:xcc-b100_0009"/>
<dbReference type="HOGENOM" id="CLU_053325_2_0_6"/>
<dbReference type="Proteomes" id="UP000001188">
    <property type="component" value="Chromosome"/>
</dbReference>
<dbReference type="GO" id="GO:0005886">
    <property type="term" value="C:plasma membrane"/>
    <property type="evidence" value="ECO:0007669"/>
    <property type="project" value="UniProtKB-SubCell"/>
</dbReference>
<dbReference type="GO" id="GO:0017038">
    <property type="term" value="P:protein import"/>
    <property type="evidence" value="ECO:0007669"/>
    <property type="project" value="TreeGrafter"/>
</dbReference>
<dbReference type="InterPro" id="IPR050790">
    <property type="entry name" value="ExbB/TolQ_transport"/>
</dbReference>
<dbReference type="InterPro" id="IPR002898">
    <property type="entry name" value="MotA_ExbB_proton_chnl"/>
</dbReference>
<dbReference type="PANTHER" id="PTHR30625:SF14">
    <property type="entry name" value="BIOPOLYMER TRANSPORT PROTEIN EXBB"/>
    <property type="match status" value="1"/>
</dbReference>
<dbReference type="PANTHER" id="PTHR30625">
    <property type="entry name" value="PROTEIN TOLQ"/>
    <property type="match status" value="1"/>
</dbReference>
<dbReference type="Pfam" id="PF01618">
    <property type="entry name" value="MotA_ExbB"/>
    <property type="match status" value="1"/>
</dbReference>
<organism>
    <name type="scientific">Xanthomonas campestris pv. campestris (strain B100)</name>
    <dbReference type="NCBI Taxonomy" id="509169"/>
    <lineage>
        <taxon>Bacteria</taxon>
        <taxon>Pseudomonadati</taxon>
        <taxon>Pseudomonadota</taxon>
        <taxon>Gammaproteobacteria</taxon>
        <taxon>Lysobacterales</taxon>
        <taxon>Lysobacteraceae</taxon>
        <taxon>Xanthomonas</taxon>
    </lineage>
</organism>